<organism>
    <name type="scientific">Dictyostelium discoideum</name>
    <name type="common">Social amoeba</name>
    <dbReference type="NCBI Taxonomy" id="44689"/>
    <lineage>
        <taxon>Eukaryota</taxon>
        <taxon>Amoebozoa</taxon>
        <taxon>Evosea</taxon>
        <taxon>Eumycetozoa</taxon>
        <taxon>Dictyostelia</taxon>
        <taxon>Dictyosteliales</taxon>
        <taxon>Dictyosteliaceae</taxon>
        <taxon>Dictyostelium</taxon>
    </lineage>
</organism>
<keyword id="KW-0472">Membrane</keyword>
<keyword id="KW-1185">Reference proteome</keyword>
<keyword id="KW-0732">Signal</keyword>
<keyword id="KW-0812">Transmembrane</keyword>
<keyword id="KW-1133">Transmembrane helix</keyword>
<gene>
    <name type="ORF">DDB_G0289901</name>
</gene>
<feature type="signal peptide" evidence="1">
    <location>
        <begin position="1"/>
        <end position="20"/>
    </location>
</feature>
<feature type="chain" id="PRO_0000346938" description="Uncharacterized transmembrane protein DDB_G0289901">
    <location>
        <begin position="21"/>
        <end position="1143"/>
    </location>
</feature>
<feature type="topological domain" description="Extracellular" evidence="1">
    <location>
        <begin position="21"/>
        <end position="1121"/>
    </location>
</feature>
<feature type="transmembrane region" description="Helical" evidence="1">
    <location>
        <begin position="1122"/>
        <end position="1142"/>
    </location>
</feature>
<feature type="topological domain" description="Cytoplasmic" evidence="1">
    <location>
        <position position="1143"/>
    </location>
</feature>
<feature type="region of interest" description="Disordered" evidence="2">
    <location>
        <begin position="177"/>
        <end position="1120"/>
    </location>
</feature>
<feature type="compositionally biased region" description="Gly residues" evidence="2">
    <location>
        <begin position="177"/>
        <end position="203"/>
    </location>
</feature>
<feature type="compositionally biased region" description="Low complexity" evidence="2">
    <location>
        <begin position="222"/>
        <end position="236"/>
    </location>
</feature>
<feature type="compositionally biased region" description="Gly residues" evidence="2">
    <location>
        <begin position="237"/>
        <end position="283"/>
    </location>
</feature>
<feature type="compositionally biased region" description="Low complexity" evidence="2">
    <location>
        <begin position="284"/>
        <end position="296"/>
    </location>
</feature>
<feature type="compositionally biased region" description="Gly residues" evidence="2">
    <location>
        <begin position="297"/>
        <end position="330"/>
    </location>
</feature>
<feature type="compositionally biased region" description="Low complexity" evidence="2">
    <location>
        <begin position="331"/>
        <end position="368"/>
    </location>
</feature>
<feature type="compositionally biased region" description="Gly residues" evidence="2">
    <location>
        <begin position="374"/>
        <end position="392"/>
    </location>
</feature>
<feature type="compositionally biased region" description="Low complexity" evidence="2">
    <location>
        <begin position="393"/>
        <end position="403"/>
    </location>
</feature>
<feature type="compositionally biased region" description="Gly residues" evidence="2">
    <location>
        <begin position="404"/>
        <end position="418"/>
    </location>
</feature>
<feature type="compositionally biased region" description="Gly residues" evidence="2">
    <location>
        <begin position="430"/>
        <end position="444"/>
    </location>
</feature>
<feature type="compositionally biased region" description="Low complexity" evidence="2">
    <location>
        <begin position="445"/>
        <end position="498"/>
    </location>
</feature>
<feature type="compositionally biased region" description="Low complexity" evidence="2">
    <location>
        <begin position="506"/>
        <end position="541"/>
    </location>
</feature>
<feature type="compositionally biased region" description="Gly residues" evidence="2">
    <location>
        <begin position="555"/>
        <end position="573"/>
    </location>
</feature>
<feature type="compositionally biased region" description="Gly residues" evidence="2">
    <location>
        <begin position="580"/>
        <end position="596"/>
    </location>
</feature>
<feature type="compositionally biased region" description="Gly residues" evidence="2">
    <location>
        <begin position="604"/>
        <end position="622"/>
    </location>
</feature>
<feature type="compositionally biased region" description="Gly residues" evidence="2">
    <location>
        <begin position="629"/>
        <end position="783"/>
    </location>
</feature>
<feature type="compositionally biased region" description="Gly residues" evidence="2">
    <location>
        <begin position="790"/>
        <end position="843"/>
    </location>
</feature>
<feature type="compositionally biased region" description="Gly residues" evidence="2">
    <location>
        <begin position="851"/>
        <end position="905"/>
    </location>
</feature>
<feature type="compositionally biased region" description="Low complexity" evidence="2">
    <location>
        <begin position="906"/>
        <end position="1059"/>
    </location>
</feature>
<feature type="compositionally biased region" description="Polar residues" evidence="2">
    <location>
        <begin position="1062"/>
        <end position="1078"/>
    </location>
</feature>
<feature type="compositionally biased region" description="Low complexity" evidence="2">
    <location>
        <begin position="1094"/>
        <end position="1114"/>
    </location>
</feature>
<proteinExistence type="inferred from homology"/>
<name>Y8625_DICDI</name>
<reference key="1">
    <citation type="journal article" date="2005" name="Nature">
        <title>The genome of the social amoeba Dictyostelium discoideum.</title>
        <authorList>
            <person name="Eichinger L."/>
            <person name="Pachebat J.A."/>
            <person name="Gloeckner G."/>
            <person name="Rajandream M.A."/>
            <person name="Sucgang R."/>
            <person name="Berriman M."/>
            <person name="Song J."/>
            <person name="Olsen R."/>
            <person name="Szafranski K."/>
            <person name="Xu Q."/>
            <person name="Tunggal B."/>
            <person name="Kummerfeld S."/>
            <person name="Madera M."/>
            <person name="Konfortov B.A."/>
            <person name="Rivero F."/>
            <person name="Bankier A.T."/>
            <person name="Lehmann R."/>
            <person name="Hamlin N."/>
            <person name="Davies R."/>
            <person name="Gaudet P."/>
            <person name="Fey P."/>
            <person name="Pilcher K."/>
            <person name="Chen G."/>
            <person name="Saunders D."/>
            <person name="Sodergren E.J."/>
            <person name="Davis P."/>
            <person name="Kerhornou A."/>
            <person name="Nie X."/>
            <person name="Hall N."/>
            <person name="Anjard C."/>
            <person name="Hemphill L."/>
            <person name="Bason N."/>
            <person name="Farbrother P."/>
            <person name="Desany B."/>
            <person name="Just E."/>
            <person name="Morio T."/>
            <person name="Rost R."/>
            <person name="Churcher C.M."/>
            <person name="Cooper J."/>
            <person name="Haydock S."/>
            <person name="van Driessche N."/>
            <person name="Cronin A."/>
            <person name="Goodhead I."/>
            <person name="Muzny D.M."/>
            <person name="Mourier T."/>
            <person name="Pain A."/>
            <person name="Lu M."/>
            <person name="Harper D."/>
            <person name="Lindsay R."/>
            <person name="Hauser H."/>
            <person name="James K.D."/>
            <person name="Quiles M."/>
            <person name="Madan Babu M."/>
            <person name="Saito T."/>
            <person name="Buchrieser C."/>
            <person name="Wardroper A."/>
            <person name="Felder M."/>
            <person name="Thangavelu M."/>
            <person name="Johnson D."/>
            <person name="Knights A."/>
            <person name="Loulseged H."/>
            <person name="Mungall K.L."/>
            <person name="Oliver K."/>
            <person name="Price C."/>
            <person name="Quail M.A."/>
            <person name="Urushihara H."/>
            <person name="Hernandez J."/>
            <person name="Rabbinowitsch E."/>
            <person name="Steffen D."/>
            <person name="Sanders M."/>
            <person name="Ma J."/>
            <person name="Kohara Y."/>
            <person name="Sharp S."/>
            <person name="Simmonds M.N."/>
            <person name="Spiegler S."/>
            <person name="Tivey A."/>
            <person name="Sugano S."/>
            <person name="White B."/>
            <person name="Walker D."/>
            <person name="Woodward J.R."/>
            <person name="Winckler T."/>
            <person name="Tanaka Y."/>
            <person name="Shaulsky G."/>
            <person name="Schleicher M."/>
            <person name="Weinstock G.M."/>
            <person name="Rosenthal A."/>
            <person name="Cox E.C."/>
            <person name="Chisholm R.L."/>
            <person name="Gibbs R.A."/>
            <person name="Loomis W.F."/>
            <person name="Platzer M."/>
            <person name="Kay R.R."/>
            <person name="Williams J.G."/>
            <person name="Dear P.H."/>
            <person name="Noegel A.A."/>
            <person name="Barrell B.G."/>
            <person name="Kuspa A."/>
        </authorList>
    </citation>
    <scope>NUCLEOTIDE SEQUENCE [LARGE SCALE GENOMIC DNA]</scope>
    <source>
        <strain>AX4</strain>
    </source>
</reference>
<dbReference type="EMBL" id="AAFI02000149">
    <property type="protein sequence ID" value="EAL62463.1"/>
    <property type="molecule type" value="Genomic_DNA"/>
</dbReference>
<dbReference type="RefSeq" id="XP_635961.1">
    <property type="nucleotide sequence ID" value="XM_630869.1"/>
</dbReference>
<dbReference type="GlyGen" id="Q54GV8">
    <property type="glycosylation" value="2 sites"/>
</dbReference>
<dbReference type="PaxDb" id="44689-DDB0302663"/>
<dbReference type="EnsemblProtists" id="EAL62463">
    <property type="protein sequence ID" value="EAL62463"/>
    <property type="gene ID" value="DDB_G0289901"/>
</dbReference>
<dbReference type="GeneID" id="8627376"/>
<dbReference type="KEGG" id="ddi:DDB_G0289901"/>
<dbReference type="dictyBase" id="DDB_G0289901"/>
<dbReference type="VEuPathDB" id="AmoebaDB:DDB_G0289901"/>
<dbReference type="eggNOG" id="ENOG502RIK7">
    <property type="taxonomic scope" value="Eukaryota"/>
</dbReference>
<dbReference type="HOGENOM" id="CLU_277494_0_0_1"/>
<dbReference type="InParanoid" id="Q54GV8"/>
<dbReference type="OMA" id="STSPWHN"/>
<dbReference type="PRO" id="PR:Q54GV8"/>
<dbReference type="Proteomes" id="UP000002195">
    <property type="component" value="Chromosome 5"/>
</dbReference>
<dbReference type="GO" id="GO:0016020">
    <property type="term" value="C:membrane"/>
    <property type="evidence" value="ECO:0007669"/>
    <property type="project" value="UniProtKB-SubCell"/>
</dbReference>
<evidence type="ECO:0000255" key="1"/>
<evidence type="ECO:0000256" key="2">
    <source>
        <dbReference type="SAM" id="MobiDB-lite"/>
    </source>
</evidence>
<evidence type="ECO:0000305" key="3"/>
<accession>Q54GV8</accession>
<protein>
    <recommendedName>
        <fullName>Uncharacterized transmembrane protein DDB_G0289901</fullName>
    </recommendedName>
</protein>
<comment type="subcellular location">
    <subcellularLocation>
        <location evidence="3">Membrane</location>
        <topology evidence="3">Single-pass type I membrane protein</topology>
    </subcellularLocation>
</comment>
<sequence>MKLLLLALILVLSNINLISGNGLVWPHPRLPCSPYDERGCINTQKCSSTDCDSFKRRIYFDVAYNTAFTIYQHTIFKYYSANYYKVELIVGGKVYFIHKFGQFRGDDCEFDEIIPAFYKKVQFLDLSTPIKATIQFSFDFSSHPKHANIYYSCIDVWLFDSAYYNYCPTNSGGGSGNSGGSWSSGGSGNSGGGWSSGGSGNSGGSWSSGNSGGHSTGDCPTSSGGWTSGSHSSGSWSSGGGSGSSSGGQSSGSWSSGGGSSSGGHSSGSWSSGGGSSAGGGSSSGSHSSGSWSSGGSSSGGQSSGSWSSGGGSSSGGQSSGSWSSGGGSSSGSHSSGSWSSGGSSSGSHSSGSWSSGGSSSSSGNSGWMTASGGNTGGNTGGNTGGNTGGQSSGNSGWMTASGGNTGGNTGGNTGGQSSGNSGWMTASGGNTGGNTGGNTGGQSSGSSSSGGNSGWLTSSGSNSGSSSSGSNSGWLTSSGNSVSSSSGGNSGWLTSSGGNSGGNSGSSSSGGNSGWLTSSGGNSGGSSSSGSNSGASSSGDNTGGNSGWLTSSGGNTGGNSGAATGGNSGGNSGASSSGGNSGGASSSGGNTGGNSGWLTSSGGNTGGNSGAATGGNSGGNSGASSSGGNSGWLTGGVTGGNSGGATGGNSGGATGGNSGGATGGNSGGATGGNSGGASSSGGNSGGATGGNSGGATGGNSGGATGGNSGGATGGNSGGATGGNSGGATGGNSGGASSSGGNTGGNSGGATGGNSGGATGGNSGGATGGNSGGATGGNSGGNSGASSSGGNSGWLTGGATGGNSGGATGGNSGAATGGNSGATGGNSGGNSGAATGGNIGGASSGSSSSGGNSGWLTGGATGGNSGGATGGNSGGATGGNSGGATGGNSGGATGGNSGGATGGNSGAATGANSGAATGANSGAATGANSGAATGANSGNNAAVTGAANGNNGAAAGANSGAATAANSGAATAANSGAATAANRGNNAAATGAANGNNGAAAGANSGAATAANSGAANSGAATAANSGAAAGANSGAATAANSGAATAASGGNGASGAANPGSIVTPNDQNVSPLSNSDAAATAASTTGRNPRNPTSRAPTVTPTPTSSAEEPAAGGEDSSAISKYSIQSFGIFVLSMIIYLVI</sequence>